<comment type="function">
    <text evidence="1">Associates with the EF-Tu.GDP complex and induces the exchange of GDP to GTP. It remains bound to the aminoacyl-tRNA.EF-Tu.GTP complex up to the GTP hydrolysis stage on the ribosome.</text>
</comment>
<comment type="subcellular location">
    <subcellularLocation>
        <location evidence="1">Cytoplasm</location>
    </subcellularLocation>
</comment>
<comment type="similarity">
    <text evidence="1">Belongs to the EF-Ts family.</text>
</comment>
<sequence length="282" mass="30060">MAITAAQVKELRDRTGAGMMDCKKALTETNGDIELAIDNMRKSGAAKAAKKAGNIAAEGAILIKNGEGFAALLEVNCQTDFVAKDANFLAFANSVLDVASAAKVSIEDLKAQFEETRVALVAKIGENINVRRVEYIDGANLAQYRHGERIGVVVAGEADEETLKHVAMHVAASKPEFVNPEDVPADLVEKEKALQIEIAMNEGKPAEIAEKMVIGRMKKFTGEISLTGQAYIMEPKKTVGAVLKEKGASVSNFIRLEVGEGIAKKEEDFAAEVAAQIAATKG</sequence>
<protein>
    <recommendedName>
        <fullName evidence="1">Elongation factor Ts</fullName>
        <shortName evidence="1">EF-Ts</shortName>
    </recommendedName>
</protein>
<accession>B8CQ84</accession>
<proteinExistence type="inferred from homology"/>
<reference key="1">
    <citation type="journal article" date="2008" name="PLoS ONE">
        <title>Environmental adaptation: genomic analysis of the piezotolerant and psychrotolerant deep-sea iron reducing bacterium Shewanella piezotolerans WP3.</title>
        <authorList>
            <person name="Wang F."/>
            <person name="Wang J."/>
            <person name="Jian H."/>
            <person name="Zhang B."/>
            <person name="Li S."/>
            <person name="Wang F."/>
            <person name="Zeng X."/>
            <person name="Gao L."/>
            <person name="Bartlett D.H."/>
            <person name="Yu J."/>
            <person name="Hu S."/>
            <person name="Xiao X."/>
        </authorList>
    </citation>
    <scope>NUCLEOTIDE SEQUENCE [LARGE SCALE GENOMIC DNA]</scope>
    <source>
        <strain>WP3 / JCM 13877</strain>
    </source>
</reference>
<keyword id="KW-0963">Cytoplasm</keyword>
<keyword id="KW-0251">Elongation factor</keyword>
<keyword id="KW-0648">Protein biosynthesis</keyword>
<evidence type="ECO:0000255" key="1">
    <source>
        <dbReference type="HAMAP-Rule" id="MF_00050"/>
    </source>
</evidence>
<name>EFTS_SHEPW</name>
<organism>
    <name type="scientific">Shewanella piezotolerans (strain WP3 / JCM 13877)</name>
    <dbReference type="NCBI Taxonomy" id="225849"/>
    <lineage>
        <taxon>Bacteria</taxon>
        <taxon>Pseudomonadati</taxon>
        <taxon>Pseudomonadota</taxon>
        <taxon>Gammaproteobacteria</taxon>
        <taxon>Alteromonadales</taxon>
        <taxon>Shewanellaceae</taxon>
        <taxon>Shewanella</taxon>
    </lineage>
</organism>
<dbReference type="EMBL" id="CP000472">
    <property type="protein sequence ID" value="ACJ30214.1"/>
    <property type="molecule type" value="Genomic_DNA"/>
</dbReference>
<dbReference type="RefSeq" id="WP_020913561.1">
    <property type="nucleotide sequence ID" value="NC_011566.1"/>
</dbReference>
<dbReference type="SMR" id="B8CQ84"/>
<dbReference type="STRING" id="225849.swp_3521"/>
<dbReference type="KEGG" id="swp:swp_3521"/>
<dbReference type="eggNOG" id="COG0264">
    <property type="taxonomic scope" value="Bacteria"/>
</dbReference>
<dbReference type="HOGENOM" id="CLU_047155_0_2_6"/>
<dbReference type="OrthoDB" id="9808348at2"/>
<dbReference type="Proteomes" id="UP000000753">
    <property type="component" value="Chromosome"/>
</dbReference>
<dbReference type="GO" id="GO:0005737">
    <property type="term" value="C:cytoplasm"/>
    <property type="evidence" value="ECO:0007669"/>
    <property type="project" value="UniProtKB-SubCell"/>
</dbReference>
<dbReference type="GO" id="GO:0003746">
    <property type="term" value="F:translation elongation factor activity"/>
    <property type="evidence" value="ECO:0007669"/>
    <property type="project" value="UniProtKB-UniRule"/>
</dbReference>
<dbReference type="CDD" id="cd14275">
    <property type="entry name" value="UBA_EF-Ts"/>
    <property type="match status" value="1"/>
</dbReference>
<dbReference type="FunFam" id="1.10.286.20:FF:000001">
    <property type="entry name" value="Elongation factor Ts"/>
    <property type="match status" value="1"/>
</dbReference>
<dbReference type="FunFam" id="1.10.8.10:FF:000001">
    <property type="entry name" value="Elongation factor Ts"/>
    <property type="match status" value="1"/>
</dbReference>
<dbReference type="FunFam" id="3.30.479.20:FF:000001">
    <property type="entry name" value="Elongation factor Ts"/>
    <property type="match status" value="1"/>
</dbReference>
<dbReference type="Gene3D" id="1.10.286.20">
    <property type="match status" value="1"/>
</dbReference>
<dbReference type="Gene3D" id="1.10.8.10">
    <property type="entry name" value="DNA helicase RuvA subunit, C-terminal domain"/>
    <property type="match status" value="1"/>
</dbReference>
<dbReference type="Gene3D" id="3.30.479.20">
    <property type="entry name" value="Elongation factor Ts, dimerisation domain"/>
    <property type="match status" value="2"/>
</dbReference>
<dbReference type="HAMAP" id="MF_00050">
    <property type="entry name" value="EF_Ts"/>
    <property type="match status" value="1"/>
</dbReference>
<dbReference type="InterPro" id="IPR036402">
    <property type="entry name" value="EF-Ts_dimer_sf"/>
</dbReference>
<dbReference type="InterPro" id="IPR001816">
    <property type="entry name" value="Transl_elong_EFTs/EF1B"/>
</dbReference>
<dbReference type="InterPro" id="IPR014039">
    <property type="entry name" value="Transl_elong_EFTs/EF1B_dimer"/>
</dbReference>
<dbReference type="InterPro" id="IPR018101">
    <property type="entry name" value="Transl_elong_Ts_CS"/>
</dbReference>
<dbReference type="InterPro" id="IPR009060">
    <property type="entry name" value="UBA-like_sf"/>
</dbReference>
<dbReference type="NCBIfam" id="TIGR00116">
    <property type="entry name" value="tsf"/>
    <property type="match status" value="1"/>
</dbReference>
<dbReference type="PANTHER" id="PTHR11741">
    <property type="entry name" value="ELONGATION FACTOR TS"/>
    <property type="match status" value="1"/>
</dbReference>
<dbReference type="PANTHER" id="PTHR11741:SF0">
    <property type="entry name" value="ELONGATION FACTOR TS, MITOCHONDRIAL"/>
    <property type="match status" value="1"/>
</dbReference>
<dbReference type="Pfam" id="PF00889">
    <property type="entry name" value="EF_TS"/>
    <property type="match status" value="1"/>
</dbReference>
<dbReference type="SUPFAM" id="SSF54713">
    <property type="entry name" value="Elongation factor Ts (EF-Ts), dimerisation domain"/>
    <property type="match status" value="2"/>
</dbReference>
<dbReference type="SUPFAM" id="SSF46934">
    <property type="entry name" value="UBA-like"/>
    <property type="match status" value="1"/>
</dbReference>
<dbReference type="PROSITE" id="PS01126">
    <property type="entry name" value="EF_TS_1"/>
    <property type="match status" value="1"/>
</dbReference>
<dbReference type="PROSITE" id="PS01127">
    <property type="entry name" value="EF_TS_2"/>
    <property type="match status" value="1"/>
</dbReference>
<feature type="chain" id="PRO_1000116789" description="Elongation factor Ts">
    <location>
        <begin position="1"/>
        <end position="282"/>
    </location>
</feature>
<feature type="region of interest" description="Involved in Mg(2+) ion dislocation from EF-Tu" evidence="1">
    <location>
        <begin position="79"/>
        <end position="82"/>
    </location>
</feature>
<gene>
    <name evidence="1" type="primary">tsf</name>
    <name type="ordered locus">swp_3521</name>
</gene>